<feature type="chain" id="PRO_0000090006" description="Competence protein C">
    <location>
        <begin position="1"/>
        <end position="173"/>
    </location>
</feature>
<keyword id="KW-0178">Competence</keyword>
<keyword id="KW-1185">Reference proteome</keyword>
<comment type="function">
    <text>Involved in transformation (genetic competence for DNA uptake).</text>
</comment>
<accession>P31770</accession>
<proteinExistence type="predicted"/>
<organism>
    <name type="scientific">Haemophilus influenzae (strain ATCC 51907 / DSM 11121 / KW20 / Rd)</name>
    <dbReference type="NCBI Taxonomy" id="71421"/>
    <lineage>
        <taxon>Bacteria</taxon>
        <taxon>Pseudomonadati</taxon>
        <taxon>Pseudomonadota</taxon>
        <taxon>Gammaproteobacteria</taxon>
        <taxon>Pasteurellales</taxon>
        <taxon>Pasteurellaceae</taxon>
        <taxon>Haemophilus</taxon>
    </lineage>
</organism>
<dbReference type="EMBL" id="M62809">
    <property type="protein sequence ID" value="AAA25010.1"/>
    <property type="molecule type" value="Genomic_DNA"/>
</dbReference>
<dbReference type="EMBL" id="L42023">
    <property type="protein sequence ID" value="AAC22096.1"/>
    <property type="molecule type" value="Genomic_DNA"/>
</dbReference>
<dbReference type="PIR" id="A64068">
    <property type="entry name" value="JH0432"/>
</dbReference>
<dbReference type="RefSeq" id="NP_438598.1">
    <property type="nucleotide sequence ID" value="NC_000907.1"/>
</dbReference>
<dbReference type="SMR" id="P31770"/>
<dbReference type="STRING" id="71421.HI_0437"/>
<dbReference type="EnsemblBacteria" id="AAC22096">
    <property type="protein sequence ID" value="AAC22096"/>
    <property type="gene ID" value="HI_0437"/>
</dbReference>
<dbReference type="KEGG" id="hin:HI_0437"/>
<dbReference type="PATRIC" id="fig|71421.8.peg.457"/>
<dbReference type="eggNOG" id="ENOG5031K36">
    <property type="taxonomic scope" value="Bacteria"/>
</dbReference>
<dbReference type="HOGENOM" id="CLU_128125_0_0_6"/>
<dbReference type="OrthoDB" id="5685739at2"/>
<dbReference type="BioCyc" id="HINF71421:G1GJ1-452-MONOMER"/>
<dbReference type="Proteomes" id="UP000000579">
    <property type="component" value="Chromosome"/>
</dbReference>
<dbReference type="GO" id="GO:0030420">
    <property type="term" value="P:establishment of competence for transformation"/>
    <property type="evidence" value="ECO:0007669"/>
    <property type="project" value="UniProtKB-KW"/>
</dbReference>
<reference key="1">
    <citation type="journal article" date="1991" name="Gene">
        <title>Nucleotide sequence of a cluster of genes involved in the transformation of Haemophilus influenzae Rd.</title>
        <authorList>
            <person name="Tomb J.-F."/>
            <person name="El-Hajj H."/>
            <person name="Smith H.O."/>
        </authorList>
    </citation>
    <scope>NUCLEOTIDE SEQUENCE [GENOMIC DNA]</scope>
    <source>
        <strain>ATCC 51907 / DSM 11121 / KW20 / Rd</strain>
    </source>
</reference>
<reference key="2">
    <citation type="journal article" date="1995" name="Science">
        <title>Whole-genome random sequencing and assembly of Haemophilus influenzae Rd.</title>
        <authorList>
            <person name="Fleischmann R.D."/>
            <person name="Adams M.D."/>
            <person name="White O."/>
            <person name="Clayton R.A."/>
            <person name="Kirkness E.F."/>
            <person name="Kerlavage A.R."/>
            <person name="Bult C.J."/>
            <person name="Tomb J.-F."/>
            <person name="Dougherty B.A."/>
            <person name="Merrick J.M."/>
            <person name="McKenney K."/>
            <person name="Sutton G.G."/>
            <person name="FitzHugh W."/>
            <person name="Fields C.A."/>
            <person name="Gocayne J.D."/>
            <person name="Scott J.D."/>
            <person name="Shirley R."/>
            <person name="Liu L.-I."/>
            <person name="Glodek A."/>
            <person name="Kelley J.M."/>
            <person name="Weidman J.F."/>
            <person name="Phillips C.A."/>
            <person name="Spriggs T."/>
            <person name="Hedblom E."/>
            <person name="Cotton M.D."/>
            <person name="Utterback T.R."/>
            <person name="Hanna M.C."/>
            <person name="Nguyen D.T."/>
            <person name="Saudek D.M."/>
            <person name="Brandon R.C."/>
            <person name="Fine L.D."/>
            <person name="Fritchman J.L."/>
            <person name="Fuhrmann J.L."/>
            <person name="Geoghagen N.S.M."/>
            <person name="Gnehm C.L."/>
            <person name="McDonald L.A."/>
            <person name="Small K.V."/>
            <person name="Fraser C.M."/>
            <person name="Smith H.O."/>
            <person name="Venter J.C."/>
        </authorList>
    </citation>
    <scope>NUCLEOTIDE SEQUENCE [LARGE SCALE GENOMIC DNA]</scope>
    <source>
        <strain>ATCC 51907 / DSM 11121 / KW20 / Rd</strain>
    </source>
</reference>
<sequence>MKAFFNDPFTPFGKWLSQPFYVHGLTFLLLLSAVIFRPVLDYIEGSSRFHEIENELAVKRSELLHQQKILTSLQQQSESRKLSPELAAQIIPLNKQIQRLAARNGLSQHLRWEMGQKPILHLQLTGHFEKTKTFLSALLANSSQLSVSRLQFMKPEDGPLQTEIIFQLDKETK</sequence>
<protein>
    <recommendedName>
        <fullName>Competence protein C</fullName>
    </recommendedName>
    <alternativeName>
        <fullName>DNA transformation protein ComC</fullName>
    </alternativeName>
</protein>
<gene>
    <name type="primary">comC</name>
    <name type="ordered locus">HI_0437</name>
</gene>
<name>COMC_HAEIN</name>